<organism>
    <name type="scientific">Rattus norvegicus</name>
    <name type="common">Rat</name>
    <dbReference type="NCBI Taxonomy" id="10116"/>
    <lineage>
        <taxon>Eukaryota</taxon>
        <taxon>Metazoa</taxon>
        <taxon>Chordata</taxon>
        <taxon>Craniata</taxon>
        <taxon>Vertebrata</taxon>
        <taxon>Euteleostomi</taxon>
        <taxon>Mammalia</taxon>
        <taxon>Eutheria</taxon>
        <taxon>Euarchontoglires</taxon>
        <taxon>Glires</taxon>
        <taxon>Rodentia</taxon>
        <taxon>Myomorpha</taxon>
        <taxon>Muroidea</taxon>
        <taxon>Muridae</taxon>
        <taxon>Murinae</taxon>
        <taxon>Rattus</taxon>
    </lineage>
</organism>
<name>CAH2_RAT</name>
<proteinExistence type="evidence at protein level"/>
<evidence type="ECO:0000250" key="1">
    <source>
        <dbReference type="UniProtKB" id="P00918"/>
    </source>
</evidence>
<evidence type="ECO:0000250" key="2">
    <source>
        <dbReference type="UniProtKB" id="P00920"/>
    </source>
</evidence>
<evidence type="ECO:0000250" key="3">
    <source>
        <dbReference type="UniProtKB" id="P00921"/>
    </source>
</evidence>
<evidence type="ECO:0000255" key="4">
    <source>
        <dbReference type="PROSITE-ProRule" id="PRU01134"/>
    </source>
</evidence>
<evidence type="ECO:0000256" key="5">
    <source>
        <dbReference type="SAM" id="MobiDB-lite"/>
    </source>
</evidence>
<evidence type="ECO:0000269" key="6">
    <source>
    </source>
</evidence>
<evidence type="ECO:0000305" key="7"/>
<evidence type="ECO:0007744" key="8">
    <source>
    </source>
</evidence>
<sequence>MSHHWGYSKSNGPENWHKEFPIANGDRQSPVDIDTGTAQHDPSLQPLLICYDKVASKSIVNNGHSFNVEFDDSQDFAVLKEGPLSGSYRLIQFHFHWGSSDGQGSEHTVNKKKYAAELHLVHWNTKYGDFGKAVQHPDGLAVLGIFLKIGPASQGLQKITEALHSIKTKGKRAAFANFDPCSLLPGNLDYWTYPGSLTTPPLLECVTWIVLKEPITVSSEQMSHFRKLNFNSEGEAEELMVDNWRPAQPLKNRKIKASFK</sequence>
<keyword id="KW-0007">Acetylation</keyword>
<keyword id="KW-1003">Cell membrane</keyword>
<keyword id="KW-0963">Cytoplasm</keyword>
<keyword id="KW-0903">Direct protein sequencing</keyword>
<keyword id="KW-0456">Lyase</keyword>
<keyword id="KW-0472">Membrane</keyword>
<keyword id="KW-0479">Metal-binding</keyword>
<keyword id="KW-0597">Phosphoprotein</keyword>
<keyword id="KW-1185">Reference proteome</keyword>
<keyword id="KW-0862">Zinc</keyword>
<gene>
    <name type="primary">Ca2</name>
</gene>
<feature type="initiator methionine" description="Removed" evidence="1">
    <location>
        <position position="1"/>
    </location>
</feature>
<feature type="chain" id="PRO_0000077421" description="Carbonic anhydrase 2">
    <location>
        <begin position="2"/>
        <end position="260"/>
    </location>
</feature>
<feature type="domain" description="Alpha-carbonic anhydrase" evidence="4">
    <location>
        <begin position="3"/>
        <end position="259"/>
    </location>
</feature>
<feature type="region of interest" description="Disordered" evidence="5">
    <location>
        <begin position="16"/>
        <end position="39"/>
    </location>
</feature>
<feature type="active site" description="Proton donor/acceptor" evidence="1">
    <location>
        <position position="64"/>
    </location>
</feature>
<feature type="binding site" evidence="1">
    <location>
        <position position="94"/>
    </location>
    <ligand>
        <name>Zn(2+)</name>
        <dbReference type="ChEBI" id="CHEBI:29105"/>
        <note>catalytic</note>
    </ligand>
</feature>
<feature type="binding site" evidence="1">
    <location>
        <position position="96"/>
    </location>
    <ligand>
        <name>Zn(2+)</name>
        <dbReference type="ChEBI" id="CHEBI:29105"/>
        <note>catalytic</note>
    </ligand>
</feature>
<feature type="binding site" evidence="1">
    <location>
        <position position="119"/>
    </location>
    <ligand>
        <name>Zn(2+)</name>
        <dbReference type="ChEBI" id="CHEBI:29105"/>
        <note>catalytic</note>
    </ligand>
</feature>
<feature type="binding site" evidence="1">
    <location>
        <begin position="198"/>
        <end position="199"/>
    </location>
    <ligand>
        <name>substrate</name>
    </ligand>
</feature>
<feature type="site" description="Fine-tunes the proton-transfer properties of H-64" evidence="1">
    <location>
        <position position="7"/>
    </location>
</feature>
<feature type="site" description="Fine-tunes the proton-transfer properties of H-64" evidence="1">
    <location>
        <position position="62"/>
    </location>
</feature>
<feature type="site" description="Fine-tunes the proton-transfer properties of H-64" evidence="1">
    <location>
        <position position="67"/>
    </location>
</feature>
<feature type="modified residue" description="N-acetylserine" evidence="1">
    <location>
        <position position="2"/>
    </location>
</feature>
<feature type="modified residue" description="Phosphoserine" evidence="8">
    <location>
        <position position="2"/>
    </location>
</feature>
<feature type="modified residue" description="Phosphoserine" evidence="2">
    <location>
        <position position="87"/>
    </location>
</feature>
<feature type="modified residue" description="Phosphoserine" evidence="1">
    <location>
        <position position="165"/>
    </location>
</feature>
<feature type="modified residue" description="Phosphoserine" evidence="8">
    <location>
        <position position="232"/>
    </location>
</feature>
<reference key="1">
    <citation type="journal article" date="1991" name="Gene">
        <title>Nucleotide sequence of a cDNA encoding rat brain carbonic anhydrase II and its deduced amino acid sequence.</title>
        <authorList>
            <person name="Stolle C.A."/>
            <person name="McGowan M.H."/>
            <person name="Heim R.A."/>
            <person name="Varia M."/>
            <person name="Neubauer J.A."/>
        </authorList>
    </citation>
    <scope>NUCLEOTIDE SEQUENCE [MRNA]</scope>
    <source>
        <strain>Sprague-Dawley</strain>
        <tissue>Brain</tissue>
    </source>
</reference>
<reference key="2">
    <citation type="journal article" date="1997" name="Gene">
        <title>Characterization of the rat carbonic anhydrase II gene structure: sequence analysis of the 5' flanking region and 3' UTR.</title>
        <authorList>
            <person name="McGowan M.H."/>
            <person name="Neubauer J.A."/>
            <person name="Stolle C.A."/>
        </authorList>
    </citation>
    <scope>NUCLEOTIDE SEQUENCE [GENOMIC DNA]</scope>
</reference>
<reference key="3">
    <citation type="journal article" date="2004" name="Genome Res.">
        <title>The status, quality, and expansion of the NIH full-length cDNA project: the Mammalian Gene Collection (MGC).</title>
        <authorList>
            <consortium name="The MGC Project Team"/>
        </authorList>
    </citation>
    <scope>NUCLEOTIDE SEQUENCE [LARGE SCALE MRNA]</scope>
    <source>
        <tissue>Prostate</tissue>
    </source>
</reference>
<reference key="4">
    <citation type="submission" date="2007-07" db="UniProtKB">
        <authorList>
            <person name="Lubec G."/>
            <person name="Afjehi-Sadat L."/>
            <person name="Chen W.-Q."/>
            <person name="Kang S.U."/>
        </authorList>
    </citation>
    <scope>PROTEIN SEQUENCE OF 58-80; 81-110; 114-126; 133-158 AND 213-226</scope>
    <scope>IDENTIFICATION BY MASS SPECTROMETRY</scope>
    <source>
        <strain>Sprague-Dawley</strain>
        <tissue>Brain</tissue>
        <tissue>Hippocampus</tissue>
        <tissue>Spinal cord</tissue>
    </source>
</reference>
<reference key="5">
    <citation type="journal article" date="1998" name="Exp. Cell Res.">
        <title>Carbonic anhydrase II plays a major role in osteoclast differentiation and bone resorption by effecting the steady state intracellular pH and Ca2+.</title>
        <authorList>
            <person name="Lehenkari P."/>
            <person name="Hentunen T.A."/>
            <person name="Laitala-Leinonen T."/>
            <person name="Tuukkanen J."/>
            <person name="Vaeaenaenen H.K."/>
        </authorList>
    </citation>
    <scope>FUNCTION</scope>
</reference>
<reference key="6">
    <citation type="journal article" date="2012" name="Nat. Commun.">
        <title>Quantitative maps of protein phosphorylation sites across 14 different rat organs and tissues.</title>
        <authorList>
            <person name="Lundby A."/>
            <person name="Secher A."/>
            <person name="Lage K."/>
            <person name="Nordsborg N.B."/>
            <person name="Dmytriyev A."/>
            <person name="Lundby C."/>
            <person name="Olsen J.V."/>
        </authorList>
    </citation>
    <scope>PHOSPHORYLATION [LARGE SCALE ANALYSIS] AT SER-2 AND SER-232</scope>
    <scope>IDENTIFICATION BY MASS SPECTROMETRY [LARGE SCALE ANALYSIS]</scope>
</reference>
<comment type="function">
    <text evidence="1 6">Catalyzes the reversible hydration of carbon dioxide (By similarity). Can also hydrate cyanamide to urea (By similarity). Involved in the regulation of fluid secretion into the anterior chamber of the eye (By similarity). Essential for bone resorption and osteoclast differentiation (PubMed:9665810). Contributes to intracellular pH regulation in the duodenal upper villous epithelium during proton-coupled peptide absorption (By similarity). Stimulates the chloride-bicarbonate exchange activity of SLC26A6 (By similarity).</text>
</comment>
<comment type="catalytic activity">
    <reaction evidence="1">
        <text>hydrogencarbonate + H(+) = CO2 + H2O</text>
        <dbReference type="Rhea" id="RHEA:10748"/>
        <dbReference type="ChEBI" id="CHEBI:15377"/>
        <dbReference type="ChEBI" id="CHEBI:15378"/>
        <dbReference type="ChEBI" id="CHEBI:16526"/>
        <dbReference type="ChEBI" id="CHEBI:17544"/>
        <dbReference type="EC" id="4.2.1.1"/>
    </reaction>
</comment>
<comment type="catalytic activity">
    <reaction evidence="1">
        <text>urea = cyanamide + H2O</text>
        <dbReference type="Rhea" id="RHEA:23056"/>
        <dbReference type="ChEBI" id="CHEBI:15377"/>
        <dbReference type="ChEBI" id="CHEBI:16199"/>
        <dbReference type="ChEBI" id="CHEBI:16698"/>
        <dbReference type="EC" id="4.2.1.69"/>
    </reaction>
</comment>
<comment type="cofactor">
    <cofactor evidence="3">
        <name>Zn(2+)</name>
        <dbReference type="ChEBI" id="CHEBI:29105"/>
    </cofactor>
</comment>
<comment type="activity regulation">
    <text evidence="1">Inhibited by acetazolamide.</text>
</comment>
<comment type="subunit">
    <text evidence="1">Interacts with SLC4A4 and SLC26A6. Interaction with SLC4A7 regulates SLC4A7 transporter activity (By similarity).</text>
</comment>
<comment type="subcellular location">
    <subcellularLocation>
        <location evidence="1">Cytoplasm</location>
    </subcellularLocation>
    <subcellularLocation>
        <location evidence="1">Cell membrane</location>
    </subcellularLocation>
    <text evidence="1">Colocalized with SLC26A6 at the surface of the cell membrane in order to form a bicarbonate transport metabolon. Displaced from the cytosolic surface of the cell membrane by PKC in phorbol myristate acetate (PMA)-induced cells (By similarity).</text>
</comment>
<comment type="similarity">
    <text evidence="7">Belongs to the alpha-carbonic anhydrase family.</text>
</comment>
<dbReference type="EC" id="4.2.1.1" evidence="1"/>
<dbReference type="EC" id="4.2.1.69" evidence="1"/>
<dbReference type="EMBL" id="X58294">
    <property type="protein sequence ID" value="CAA41227.1"/>
    <property type="molecule type" value="mRNA"/>
</dbReference>
<dbReference type="EMBL" id="AH006769">
    <property type="protein sequence ID" value="AAC53104.1"/>
    <property type="molecule type" value="Genomic_DNA"/>
</dbReference>
<dbReference type="EMBL" id="BC065577">
    <property type="protein sequence ID" value="AAH65577.1"/>
    <property type="molecule type" value="mRNA"/>
</dbReference>
<dbReference type="PIR" id="JH0527">
    <property type="entry name" value="JH0527"/>
</dbReference>
<dbReference type="RefSeq" id="NP_062164.1">
    <property type="nucleotide sequence ID" value="NM_019291.1"/>
</dbReference>
<dbReference type="SMR" id="P27139"/>
<dbReference type="BioGRID" id="248454">
    <property type="interactions" value="1"/>
</dbReference>
<dbReference type="FunCoup" id="P27139">
    <property type="interactions" value="942"/>
</dbReference>
<dbReference type="IntAct" id="P27139">
    <property type="interactions" value="2"/>
</dbReference>
<dbReference type="STRING" id="10116.ENSRNOP00000013354"/>
<dbReference type="BindingDB" id="P27139"/>
<dbReference type="ChEMBL" id="CHEMBL4706"/>
<dbReference type="DrugCentral" id="P27139"/>
<dbReference type="GlyGen" id="P27139">
    <property type="glycosylation" value="1 site, 1 O-linked glycan (1 site)"/>
</dbReference>
<dbReference type="iPTMnet" id="P27139"/>
<dbReference type="PhosphoSitePlus" id="P27139"/>
<dbReference type="SwissPalm" id="P27139"/>
<dbReference type="PaxDb" id="10116-ENSRNOP00000013354"/>
<dbReference type="Ensembl" id="ENSRNOT00000013354.7">
    <property type="protein sequence ID" value="ENSRNOP00000013354.3"/>
    <property type="gene ID" value="ENSRNOG00000009629.7"/>
</dbReference>
<dbReference type="GeneID" id="54231"/>
<dbReference type="KEGG" id="rno:54231"/>
<dbReference type="UCSC" id="RGD:2240">
    <property type="organism name" value="rat"/>
</dbReference>
<dbReference type="AGR" id="RGD:2240"/>
<dbReference type="CTD" id="12349"/>
<dbReference type="RGD" id="2240">
    <property type="gene designation" value="Ca2"/>
</dbReference>
<dbReference type="eggNOG" id="KOG0382">
    <property type="taxonomic scope" value="Eukaryota"/>
</dbReference>
<dbReference type="GeneTree" id="ENSGT00940000160385"/>
<dbReference type="HOGENOM" id="CLU_039326_2_1_1"/>
<dbReference type="InParanoid" id="P27139"/>
<dbReference type="OMA" id="INPHWKV"/>
<dbReference type="OrthoDB" id="429145at2759"/>
<dbReference type="PhylomeDB" id="P27139"/>
<dbReference type="TreeFam" id="TF316425"/>
<dbReference type="Reactome" id="R-RNO-1237044">
    <property type="pathway name" value="Erythrocytes take up carbon dioxide and release oxygen"/>
</dbReference>
<dbReference type="Reactome" id="R-RNO-1247673">
    <property type="pathway name" value="Erythrocytes take up oxygen and release carbon dioxide"/>
</dbReference>
<dbReference type="Reactome" id="R-RNO-1475029">
    <property type="pathway name" value="Reversible hydration of carbon dioxide"/>
</dbReference>
<dbReference type="PRO" id="PR:P27139"/>
<dbReference type="Proteomes" id="UP000002494">
    <property type="component" value="Chromosome 2"/>
</dbReference>
<dbReference type="Bgee" id="ENSRNOG00000009629">
    <property type="expression patterns" value="Expressed in stomach and 20 other cell types or tissues"/>
</dbReference>
<dbReference type="GO" id="GO:0045177">
    <property type="term" value="C:apical part of cell"/>
    <property type="evidence" value="ECO:0000314"/>
    <property type="project" value="RGD"/>
</dbReference>
<dbReference type="GO" id="GO:0030424">
    <property type="term" value="C:axon"/>
    <property type="evidence" value="ECO:0000314"/>
    <property type="project" value="RGD"/>
</dbReference>
<dbReference type="GO" id="GO:0016323">
    <property type="term" value="C:basolateral plasma membrane"/>
    <property type="evidence" value="ECO:0000314"/>
    <property type="project" value="RGD"/>
</dbReference>
<dbReference type="GO" id="GO:0005737">
    <property type="term" value="C:cytoplasm"/>
    <property type="evidence" value="ECO:0000314"/>
    <property type="project" value="UniProtKB"/>
</dbReference>
<dbReference type="GO" id="GO:0005829">
    <property type="term" value="C:cytosol"/>
    <property type="evidence" value="ECO:0000266"/>
    <property type="project" value="RGD"/>
</dbReference>
<dbReference type="GO" id="GO:0005615">
    <property type="term" value="C:extracellular space"/>
    <property type="evidence" value="ECO:0000314"/>
    <property type="project" value="RGD"/>
</dbReference>
<dbReference type="GO" id="GO:0005902">
    <property type="term" value="C:microvillus"/>
    <property type="evidence" value="ECO:0000314"/>
    <property type="project" value="RGD"/>
</dbReference>
<dbReference type="GO" id="GO:0043209">
    <property type="term" value="C:myelin sheath"/>
    <property type="evidence" value="ECO:0000266"/>
    <property type="project" value="RGD"/>
</dbReference>
<dbReference type="GO" id="GO:0005886">
    <property type="term" value="C:plasma membrane"/>
    <property type="evidence" value="ECO:0000250"/>
    <property type="project" value="UniProtKB"/>
</dbReference>
<dbReference type="GO" id="GO:0004064">
    <property type="term" value="F:arylesterase activity"/>
    <property type="evidence" value="ECO:0000266"/>
    <property type="project" value="RGD"/>
</dbReference>
<dbReference type="GO" id="GO:0004089">
    <property type="term" value="F:carbonate dehydratase activity"/>
    <property type="evidence" value="ECO:0000314"/>
    <property type="project" value="RGD"/>
</dbReference>
<dbReference type="GO" id="GO:0018820">
    <property type="term" value="F:cyanamide hydratase activity"/>
    <property type="evidence" value="ECO:0007669"/>
    <property type="project" value="RHEA"/>
</dbReference>
<dbReference type="GO" id="GO:0008270">
    <property type="term" value="F:zinc ion binding"/>
    <property type="evidence" value="ECO:0000266"/>
    <property type="project" value="RGD"/>
</dbReference>
<dbReference type="GO" id="GO:0038166">
    <property type="term" value="P:angiotensin-activated signaling pathway"/>
    <property type="evidence" value="ECO:0000250"/>
    <property type="project" value="UniProtKB"/>
</dbReference>
<dbReference type="GO" id="GO:0015670">
    <property type="term" value="P:carbon dioxide transport"/>
    <property type="evidence" value="ECO:0000266"/>
    <property type="project" value="RGD"/>
</dbReference>
<dbReference type="GO" id="GO:0071498">
    <property type="term" value="P:cellular response to fluid shear stress"/>
    <property type="evidence" value="ECO:0000270"/>
    <property type="project" value="RGD"/>
</dbReference>
<dbReference type="GO" id="GO:0044849">
    <property type="term" value="P:estrous cycle"/>
    <property type="evidence" value="ECO:0000270"/>
    <property type="project" value="RGD"/>
</dbReference>
<dbReference type="GO" id="GO:0001822">
    <property type="term" value="P:kidney development"/>
    <property type="evidence" value="ECO:0000270"/>
    <property type="project" value="RGD"/>
</dbReference>
<dbReference type="GO" id="GO:0002009">
    <property type="term" value="P:morphogenesis of an epithelium"/>
    <property type="evidence" value="ECO:0000266"/>
    <property type="project" value="RGD"/>
</dbReference>
<dbReference type="GO" id="GO:0070050">
    <property type="term" value="P:neuron cellular homeostasis"/>
    <property type="evidence" value="ECO:0000266"/>
    <property type="project" value="RGD"/>
</dbReference>
<dbReference type="GO" id="GO:0042475">
    <property type="term" value="P:odontogenesis of dentin-containing tooth"/>
    <property type="evidence" value="ECO:0000270"/>
    <property type="project" value="RGD"/>
</dbReference>
<dbReference type="GO" id="GO:0030316">
    <property type="term" value="P:osteoclast differentiation"/>
    <property type="evidence" value="ECO:0000304"/>
    <property type="project" value="RGD"/>
</dbReference>
<dbReference type="GO" id="GO:0045780">
    <property type="term" value="P:positive regulation of bone resorption"/>
    <property type="evidence" value="ECO:0000315"/>
    <property type="project" value="RGD"/>
</dbReference>
<dbReference type="GO" id="GO:0032849">
    <property type="term" value="P:positive regulation of cellular pH reduction"/>
    <property type="evidence" value="ECO:0000315"/>
    <property type="project" value="RGD"/>
</dbReference>
<dbReference type="GO" id="GO:2001150">
    <property type="term" value="P:positive regulation of dipeptide transmembrane transport"/>
    <property type="evidence" value="ECO:0000250"/>
    <property type="project" value="UniProtKB"/>
</dbReference>
<dbReference type="GO" id="GO:0045672">
    <property type="term" value="P:positive regulation of osteoclast differentiation"/>
    <property type="evidence" value="ECO:0000315"/>
    <property type="project" value="RGD"/>
</dbReference>
<dbReference type="GO" id="GO:0032230">
    <property type="term" value="P:positive regulation of synaptic transmission, GABAergic"/>
    <property type="evidence" value="ECO:0000266"/>
    <property type="project" value="RGD"/>
</dbReference>
<dbReference type="GO" id="GO:0045124">
    <property type="term" value="P:regulation of bone resorption"/>
    <property type="evidence" value="ECO:0000304"/>
    <property type="project" value="RGD"/>
</dbReference>
<dbReference type="GO" id="GO:0030641">
    <property type="term" value="P:regulation of cellular pH"/>
    <property type="evidence" value="ECO:0000304"/>
    <property type="project" value="RGD"/>
</dbReference>
<dbReference type="GO" id="GO:2001225">
    <property type="term" value="P:regulation of chloride transport"/>
    <property type="evidence" value="ECO:0000266"/>
    <property type="project" value="RGD"/>
</dbReference>
<dbReference type="GO" id="GO:0051453">
    <property type="term" value="P:regulation of intracellular pH"/>
    <property type="evidence" value="ECO:0000250"/>
    <property type="project" value="UniProtKB"/>
</dbReference>
<dbReference type="GO" id="GO:0044070">
    <property type="term" value="P:regulation of monoatomic anion transport"/>
    <property type="evidence" value="ECO:0000250"/>
    <property type="project" value="UniProtKB"/>
</dbReference>
<dbReference type="GO" id="GO:0043627">
    <property type="term" value="P:response to estrogen"/>
    <property type="evidence" value="ECO:0000270"/>
    <property type="project" value="RGD"/>
</dbReference>
<dbReference type="GO" id="GO:1904404">
    <property type="term" value="P:response to formaldehyde"/>
    <property type="evidence" value="ECO:0000270"/>
    <property type="project" value="RGD"/>
</dbReference>
<dbReference type="GO" id="GO:0009268">
    <property type="term" value="P:response to pH"/>
    <property type="evidence" value="ECO:0000270"/>
    <property type="project" value="RGD"/>
</dbReference>
<dbReference type="GO" id="GO:0048545">
    <property type="term" value="P:response to steroid hormone"/>
    <property type="evidence" value="ECO:0000270"/>
    <property type="project" value="RGD"/>
</dbReference>
<dbReference type="GO" id="GO:0010043">
    <property type="term" value="P:response to zinc ion"/>
    <property type="evidence" value="ECO:0000270"/>
    <property type="project" value="RGD"/>
</dbReference>
<dbReference type="GO" id="GO:0046903">
    <property type="term" value="P:secretion"/>
    <property type="evidence" value="ECO:0000266"/>
    <property type="project" value="RGD"/>
</dbReference>
<dbReference type="FunFam" id="3.10.200.10:FF:000001">
    <property type="entry name" value="Carbonic anhydrase 2"/>
    <property type="match status" value="1"/>
</dbReference>
<dbReference type="Gene3D" id="3.10.200.10">
    <property type="entry name" value="Alpha carbonic anhydrase"/>
    <property type="match status" value="1"/>
</dbReference>
<dbReference type="InterPro" id="IPR001148">
    <property type="entry name" value="CA_dom"/>
</dbReference>
<dbReference type="InterPro" id="IPR036398">
    <property type="entry name" value="CA_dom_sf"/>
</dbReference>
<dbReference type="InterPro" id="IPR023561">
    <property type="entry name" value="Carbonic_anhydrase_a-class"/>
</dbReference>
<dbReference type="InterPro" id="IPR018338">
    <property type="entry name" value="Carbonic_anhydrase_a-class_CS"/>
</dbReference>
<dbReference type="PANTHER" id="PTHR18952">
    <property type="entry name" value="CARBONIC ANHYDRASE"/>
    <property type="match status" value="1"/>
</dbReference>
<dbReference type="PANTHER" id="PTHR18952:SF120">
    <property type="entry name" value="CARBONIC ANHYDRASE 2"/>
    <property type="match status" value="1"/>
</dbReference>
<dbReference type="Pfam" id="PF00194">
    <property type="entry name" value="Carb_anhydrase"/>
    <property type="match status" value="1"/>
</dbReference>
<dbReference type="SMART" id="SM01057">
    <property type="entry name" value="Carb_anhydrase"/>
    <property type="match status" value="1"/>
</dbReference>
<dbReference type="SUPFAM" id="SSF51069">
    <property type="entry name" value="Carbonic anhydrase"/>
    <property type="match status" value="1"/>
</dbReference>
<dbReference type="PROSITE" id="PS00162">
    <property type="entry name" value="ALPHA_CA_1"/>
    <property type="match status" value="1"/>
</dbReference>
<dbReference type="PROSITE" id="PS51144">
    <property type="entry name" value="ALPHA_CA_2"/>
    <property type="match status" value="1"/>
</dbReference>
<accession>P27139</accession>
<protein>
    <recommendedName>
        <fullName>Carbonic anhydrase 2</fullName>
        <ecNumber evidence="1">4.2.1.1</ecNumber>
    </recommendedName>
    <alternativeName>
        <fullName>Carbonate dehydratase II</fullName>
    </alternativeName>
    <alternativeName>
        <fullName>Carbonic anhydrase II</fullName>
        <shortName>CA-II</shortName>
    </alternativeName>
    <alternativeName>
        <fullName>Cyanamide hydratase CA2</fullName>
        <ecNumber evidence="1">4.2.1.69</ecNumber>
    </alternativeName>
</protein>